<gene>
    <name type="primary">CEP76</name>
</gene>
<evidence type="ECO:0000250" key="1"/>
<evidence type="ECO:0000250" key="2">
    <source>
        <dbReference type="UniProtKB" id="Q0VEJ0"/>
    </source>
</evidence>
<evidence type="ECO:0000250" key="3">
    <source>
        <dbReference type="UniProtKB" id="Q8TAP6"/>
    </source>
</evidence>
<evidence type="ECO:0000305" key="4"/>
<proteinExistence type="evidence at transcript level"/>
<feature type="chain" id="PRO_0000089502" description="Centrosomal protein of 76 kDa">
    <location>
        <begin position="1"/>
        <end position="658"/>
    </location>
</feature>
<feature type="modified residue" description="Phosphoserine" evidence="2">
    <location>
        <position position="74"/>
    </location>
</feature>
<feature type="modified residue" description="Phosphoserine" evidence="3">
    <location>
        <position position="82"/>
    </location>
</feature>
<protein>
    <recommendedName>
        <fullName>Centrosomal protein of 76 kDa</fullName>
        <shortName>Cep76</shortName>
    </recommendedName>
</protein>
<organism>
    <name type="scientific">Pongo abelii</name>
    <name type="common">Sumatran orangutan</name>
    <name type="synonym">Pongo pygmaeus abelii</name>
    <dbReference type="NCBI Taxonomy" id="9601"/>
    <lineage>
        <taxon>Eukaryota</taxon>
        <taxon>Metazoa</taxon>
        <taxon>Chordata</taxon>
        <taxon>Craniata</taxon>
        <taxon>Vertebrata</taxon>
        <taxon>Euteleostomi</taxon>
        <taxon>Mammalia</taxon>
        <taxon>Eutheria</taxon>
        <taxon>Euarchontoglires</taxon>
        <taxon>Primates</taxon>
        <taxon>Haplorrhini</taxon>
        <taxon>Catarrhini</taxon>
        <taxon>Hominidae</taxon>
        <taxon>Pongo</taxon>
    </lineage>
</organism>
<accession>Q5RCP7</accession>
<keyword id="KW-0963">Cytoplasm</keyword>
<keyword id="KW-0206">Cytoskeleton</keyword>
<keyword id="KW-0597">Phosphoprotein</keyword>
<keyword id="KW-1185">Reference proteome</keyword>
<sequence>MSLPPEKASELKQLIHQQLSKMDVHGRIREILAETIREELAPDQHLSTEDLIKALRRRGIIDDVMKELNFVTDSVERELPSSPKQPICFDRQSTLKKTNIDPTRRYLYLQVLGGKAFLEHLQEPEPLPGQVCSTFTLCLHYRNQRFRSKPVPCACEPDFHDGFLLEVHRESLGDGTRMADSTTMLSISDPIHMVLIKTDIFGETTLVASYFLEWRSVLGSENGVTSLTVELMGVGTESKVSVGILNIKLEMYPPLNQTLSQEVVNTQLALERQKTAEKERLFLVYAKQWWREYLQIRPSHNSRLVKIFAQDENGVNRPVCSYVKPLRAGRLLDTPRQAARFVNVLGYERAPVIGGGGKQEQWCTLLAFLCRNKGDCEDHANLLCSLLLGYGLEAFVCVGTKAKGVPHAWVMTCGTDGTTTFWESLTGHRYIHKPTNPDEPPVAEQPKPLYPYRTIGCVFNHQMFLGNCQPSDAVETCVFDLNDESKWKPMSEEAIKSVCAPGATTSLPPFPPLCASTIDASVTSNEIEMQLRLLVSEHRKDLGLTTVWEDQLSYLLSPALASYEFERTTSISAGNEEFQDAIRRAVPDGHTFKGFPIHFVYRNARRAFATCLRSPFCEEIICCRGDQVRLAVRVRVFTYPESACAVWIMFACKYRSVL</sequence>
<name>CEP76_PONAB</name>
<reference key="1">
    <citation type="submission" date="2004-11" db="EMBL/GenBank/DDBJ databases">
        <authorList>
            <consortium name="The German cDNA consortium"/>
        </authorList>
    </citation>
    <scope>NUCLEOTIDE SEQUENCE [LARGE SCALE MRNA]</scope>
    <source>
        <tissue>Kidney</tissue>
    </source>
</reference>
<comment type="function">
    <text evidence="1">Centrosomal protein involved in regulation of centriole duplication. Required to limit centriole duplication to once per cell cycle by preventing centriole reduplication (By similarity).</text>
</comment>
<comment type="subunit">
    <text evidence="1">Interacts with CCP110 and CEP97.</text>
</comment>
<comment type="subcellular location">
    <subcellularLocation>
        <location evidence="1">Cytoplasm</location>
        <location evidence="1">Cytoskeleton</location>
        <location evidence="1">Microtubule organizing center</location>
        <location evidence="1">Centrosome</location>
    </subcellularLocation>
    <subcellularLocation>
        <location evidence="1">Cytoplasm</location>
        <location evidence="1">Cytoskeleton</location>
        <location evidence="1">Microtubule organizing center</location>
        <location evidence="1">Centrosome</location>
        <location evidence="1">Centriole</location>
    </subcellularLocation>
    <text evidence="1">Does not localize along the ciliary axoneme.</text>
</comment>
<comment type="similarity">
    <text evidence="4">Belongs to the CEP76 family.</text>
</comment>
<dbReference type="EMBL" id="CR858222">
    <property type="protein sequence ID" value="CAH90460.1"/>
    <property type="molecule type" value="mRNA"/>
</dbReference>
<dbReference type="RefSeq" id="NP_001125237.1">
    <property type="nucleotide sequence ID" value="NM_001131765.1"/>
</dbReference>
<dbReference type="SMR" id="Q5RCP7"/>
<dbReference type="FunCoup" id="Q5RCP7">
    <property type="interactions" value="1326"/>
</dbReference>
<dbReference type="STRING" id="9601.ENSPPYP00000010081"/>
<dbReference type="GeneID" id="100172131"/>
<dbReference type="KEGG" id="pon:100172131"/>
<dbReference type="CTD" id="79959"/>
<dbReference type="eggNOG" id="ENOG502QQEI">
    <property type="taxonomic scope" value="Eukaryota"/>
</dbReference>
<dbReference type="InParanoid" id="Q5RCP7"/>
<dbReference type="OrthoDB" id="5527234at2759"/>
<dbReference type="Proteomes" id="UP000001595">
    <property type="component" value="Unplaced"/>
</dbReference>
<dbReference type="GO" id="GO:0005814">
    <property type="term" value="C:centriole"/>
    <property type="evidence" value="ECO:0000250"/>
    <property type="project" value="UniProtKB"/>
</dbReference>
<dbReference type="GO" id="GO:0005813">
    <property type="term" value="C:centrosome"/>
    <property type="evidence" value="ECO:0007669"/>
    <property type="project" value="UniProtKB-SubCell"/>
</dbReference>
<dbReference type="GO" id="GO:0005737">
    <property type="term" value="C:cytoplasm"/>
    <property type="evidence" value="ECO:0007669"/>
    <property type="project" value="UniProtKB-KW"/>
</dbReference>
<dbReference type="GO" id="GO:0046599">
    <property type="term" value="P:regulation of centriole replication"/>
    <property type="evidence" value="ECO:0000250"/>
    <property type="project" value="UniProtKB"/>
</dbReference>
<dbReference type="FunFam" id="3.10.620.30:FF:000003">
    <property type="entry name" value="Centrosomal protein of 76 kDa"/>
    <property type="match status" value="1"/>
</dbReference>
<dbReference type="Gene3D" id="3.10.620.30">
    <property type="match status" value="1"/>
</dbReference>
<dbReference type="InterPro" id="IPR052299">
    <property type="entry name" value="CEP76"/>
</dbReference>
<dbReference type="InterPro" id="IPR028926">
    <property type="entry name" value="CEP76-C2"/>
</dbReference>
<dbReference type="InterPro" id="IPR056288">
    <property type="entry name" value="CEP76_C"/>
</dbReference>
<dbReference type="InterPro" id="IPR056289">
    <property type="entry name" value="CEP76_N"/>
</dbReference>
<dbReference type="InterPro" id="IPR056290">
    <property type="entry name" value="CEPT76/DRC7_peptidase-like_dom"/>
</dbReference>
<dbReference type="InterPro" id="IPR038765">
    <property type="entry name" value="Papain-like_cys_pep_sf"/>
</dbReference>
<dbReference type="PANTHER" id="PTHR46436">
    <property type="entry name" value="CENTROSOMAL PROTEIN OF 76 KDA"/>
    <property type="match status" value="1"/>
</dbReference>
<dbReference type="PANTHER" id="PTHR46436:SF1">
    <property type="entry name" value="CENTROSOMAL PROTEIN OF 76 KDA"/>
    <property type="match status" value="1"/>
</dbReference>
<dbReference type="Pfam" id="PF15627">
    <property type="entry name" value="CEP76-C2"/>
    <property type="match status" value="1"/>
</dbReference>
<dbReference type="Pfam" id="PF24652">
    <property type="entry name" value="CEP76_C"/>
    <property type="match status" value="1"/>
</dbReference>
<dbReference type="Pfam" id="PF24654">
    <property type="entry name" value="CEP76_N"/>
    <property type="match status" value="1"/>
</dbReference>
<dbReference type="Pfam" id="PF24656">
    <property type="entry name" value="CEPT76_peptidase"/>
    <property type="match status" value="1"/>
</dbReference>
<dbReference type="SUPFAM" id="SSF54001">
    <property type="entry name" value="Cysteine proteinases"/>
    <property type="match status" value="1"/>
</dbReference>